<proteinExistence type="inferred from homology"/>
<reference key="1">
    <citation type="journal article" date="2006" name="Proc. Natl. Acad. Sci. U.S.A.">
        <title>Identification of genes subject to positive selection in uropathogenic strains of Escherichia coli: a comparative genomics approach.</title>
        <authorList>
            <person name="Chen S.L."/>
            <person name="Hung C.-S."/>
            <person name="Xu J."/>
            <person name="Reigstad C.S."/>
            <person name="Magrini V."/>
            <person name="Sabo A."/>
            <person name="Blasiar D."/>
            <person name="Bieri T."/>
            <person name="Meyer R.R."/>
            <person name="Ozersky P."/>
            <person name="Armstrong J.R."/>
            <person name="Fulton R.S."/>
            <person name="Latreille J.P."/>
            <person name="Spieth J."/>
            <person name="Hooton T.M."/>
            <person name="Mardis E.R."/>
            <person name="Hultgren S.J."/>
            <person name="Gordon J.I."/>
        </authorList>
    </citation>
    <scope>NUCLEOTIDE SEQUENCE [LARGE SCALE GENOMIC DNA]</scope>
    <source>
        <strain>UTI89 / UPEC</strain>
    </source>
</reference>
<comment type="function">
    <text evidence="1">Protein S19 forms a complex with S13 that binds strongly to the 16S ribosomal RNA.</text>
</comment>
<comment type="similarity">
    <text evidence="1">Belongs to the universal ribosomal protein uS19 family.</text>
</comment>
<evidence type="ECO:0000255" key="1">
    <source>
        <dbReference type="HAMAP-Rule" id="MF_00531"/>
    </source>
</evidence>
<evidence type="ECO:0000305" key="2"/>
<protein>
    <recommendedName>
        <fullName evidence="1">Small ribosomal subunit protein uS19</fullName>
    </recommendedName>
    <alternativeName>
        <fullName evidence="2">30S ribosomal protein S19</fullName>
    </alternativeName>
</protein>
<organism>
    <name type="scientific">Escherichia coli (strain UTI89 / UPEC)</name>
    <dbReference type="NCBI Taxonomy" id="364106"/>
    <lineage>
        <taxon>Bacteria</taxon>
        <taxon>Pseudomonadati</taxon>
        <taxon>Pseudomonadota</taxon>
        <taxon>Gammaproteobacteria</taxon>
        <taxon>Enterobacterales</taxon>
        <taxon>Enterobacteriaceae</taxon>
        <taxon>Escherichia</taxon>
    </lineage>
</organism>
<gene>
    <name evidence="1" type="primary">rpsS</name>
    <name type="ordered locus">UTI89_C3768</name>
</gene>
<feature type="chain" id="PRO_0000265359" description="Small ribosomal subunit protein uS19">
    <location>
        <begin position="1"/>
        <end position="92"/>
    </location>
</feature>
<sequence length="92" mass="10430">MPRSLKKGPFIDLHLLKKVEKAVESGDKKPLRTWSRRSTIFPNMIGLTIAVHNGRQHVPVFVTDEMVGHKLGEFAPTRTYRGHAADKKAKKK</sequence>
<name>RS19_ECOUT</name>
<dbReference type="EMBL" id="CP000243">
    <property type="protein sequence ID" value="ABE09205.1"/>
    <property type="molecule type" value="Genomic_DNA"/>
</dbReference>
<dbReference type="RefSeq" id="WP_001138117.1">
    <property type="nucleotide sequence ID" value="NZ_CP064825.1"/>
</dbReference>
<dbReference type="SMR" id="Q1R609"/>
<dbReference type="GeneID" id="98390438"/>
<dbReference type="KEGG" id="eci:UTI89_C3768"/>
<dbReference type="HOGENOM" id="CLU_144911_0_1_6"/>
<dbReference type="Proteomes" id="UP000001952">
    <property type="component" value="Chromosome"/>
</dbReference>
<dbReference type="GO" id="GO:0005737">
    <property type="term" value="C:cytoplasm"/>
    <property type="evidence" value="ECO:0007669"/>
    <property type="project" value="UniProtKB-ARBA"/>
</dbReference>
<dbReference type="GO" id="GO:0015935">
    <property type="term" value="C:small ribosomal subunit"/>
    <property type="evidence" value="ECO:0007669"/>
    <property type="project" value="InterPro"/>
</dbReference>
<dbReference type="GO" id="GO:0019843">
    <property type="term" value="F:rRNA binding"/>
    <property type="evidence" value="ECO:0007669"/>
    <property type="project" value="UniProtKB-UniRule"/>
</dbReference>
<dbReference type="GO" id="GO:0003735">
    <property type="term" value="F:structural constituent of ribosome"/>
    <property type="evidence" value="ECO:0007669"/>
    <property type="project" value="InterPro"/>
</dbReference>
<dbReference type="GO" id="GO:0000028">
    <property type="term" value="P:ribosomal small subunit assembly"/>
    <property type="evidence" value="ECO:0007669"/>
    <property type="project" value="TreeGrafter"/>
</dbReference>
<dbReference type="GO" id="GO:0006412">
    <property type="term" value="P:translation"/>
    <property type="evidence" value="ECO:0007669"/>
    <property type="project" value="UniProtKB-UniRule"/>
</dbReference>
<dbReference type="FunFam" id="3.30.860.10:FF:000001">
    <property type="entry name" value="30S ribosomal protein S19"/>
    <property type="match status" value="1"/>
</dbReference>
<dbReference type="Gene3D" id="3.30.860.10">
    <property type="entry name" value="30s Ribosomal Protein S19, Chain A"/>
    <property type="match status" value="1"/>
</dbReference>
<dbReference type="HAMAP" id="MF_00531">
    <property type="entry name" value="Ribosomal_uS19"/>
    <property type="match status" value="1"/>
</dbReference>
<dbReference type="InterPro" id="IPR002222">
    <property type="entry name" value="Ribosomal_uS19"/>
</dbReference>
<dbReference type="InterPro" id="IPR005732">
    <property type="entry name" value="Ribosomal_uS19_bac-type"/>
</dbReference>
<dbReference type="InterPro" id="IPR020934">
    <property type="entry name" value="Ribosomal_uS19_CS"/>
</dbReference>
<dbReference type="InterPro" id="IPR023575">
    <property type="entry name" value="Ribosomal_uS19_SF"/>
</dbReference>
<dbReference type="NCBIfam" id="TIGR01050">
    <property type="entry name" value="rpsS_bact"/>
    <property type="match status" value="1"/>
</dbReference>
<dbReference type="PANTHER" id="PTHR11880">
    <property type="entry name" value="RIBOSOMAL PROTEIN S19P FAMILY MEMBER"/>
    <property type="match status" value="1"/>
</dbReference>
<dbReference type="PANTHER" id="PTHR11880:SF8">
    <property type="entry name" value="SMALL RIBOSOMAL SUBUNIT PROTEIN US19M"/>
    <property type="match status" value="1"/>
</dbReference>
<dbReference type="Pfam" id="PF00203">
    <property type="entry name" value="Ribosomal_S19"/>
    <property type="match status" value="1"/>
</dbReference>
<dbReference type="PIRSF" id="PIRSF002144">
    <property type="entry name" value="Ribosomal_S19"/>
    <property type="match status" value="1"/>
</dbReference>
<dbReference type="PRINTS" id="PR00975">
    <property type="entry name" value="RIBOSOMALS19"/>
</dbReference>
<dbReference type="SUPFAM" id="SSF54570">
    <property type="entry name" value="Ribosomal protein S19"/>
    <property type="match status" value="1"/>
</dbReference>
<dbReference type="PROSITE" id="PS00323">
    <property type="entry name" value="RIBOSOMAL_S19"/>
    <property type="match status" value="1"/>
</dbReference>
<accession>Q1R609</accession>
<keyword id="KW-0687">Ribonucleoprotein</keyword>
<keyword id="KW-0689">Ribosomal protein</keyword>
<keyword id="KW-0694">RNA-binding</keyword>
<keyword id="KW-0699">rRNA-binding</keyword>